<proteinExistence type="inferred from homology"/>
<sequence length="152" mass="15628">MVKAVCVINGDAKGTVFFEQETSEAPVKVTGEVLGLAKGLHGFHVHEFGDNTNGCMSSGPHFNPRNKEHGAPTDENRHLGDLGNIQAAGDSPTAVSITDSKITLFGADSIIGRTVVVHADADDLGKGGHELSKTTGNAGARIGCGVIGIAKI</sequence>
<protein>
    <recommendedName>
        <fullName evidence="2">Superoxide dismutase [Cu-Zn]</fullName>
        <ecNumber>1.15.1.1</ecNumber>
    </recommendedName>
    <alternativeName>
        <fullName evidence="2">Superoxide dismutase 1</fullName>
    </alternativeName>
</protein>
<comment type="function">
    <text>Destroys radicals which are normally produced within the cells and which are toxic to biological systems.</text>
</comment>
<comment type="catalytic activity">
    <reaction>
        <text>2 superoxide + 2 H(+) = H2O2 + O2</text>
        <dbReference type="Rhea" id="RHEA:20696"/>
        <dbReference type="ChEBI" id="CHEBI:15378"/>
        <dbReference type="ChEBI" id="CHEBI:15379"/>
        <dbReference type="ChEBI" id="CHEBI:16240"/>
        <dbReference type="ChEBI" id="CHEBI:18421"/>
        <dbReference type="EC" id="1.15.1.1"/>
    </reaction>
</comment>
<comment type="cofactor">
    <cofactor evidence="1">
        <name>Cu cation</name>
        <dbReference type="ChEBI" id="CHEBI:23378"/>
    </cofactor>
    <text evidence="1">Binds 1 copper ion per subunit.</text>
</comment>
<comment type="cofactor">
    <cofactor evidence="1">
        <name>Zn(2+)</name>
        <dbReference type="ChEBI" id="CHEBI:29105"/>
    </cofactor>
    <text evidence="1">Binds 1 zinc ion per subunit.</text>
</comment>
<comment type="subunit">
    <text evidence="1">Homodimer.</text>
</comment>
<comment type="subcellular location">
    <subcellularLocation>
        <location>Cytoplasm</location>
    </subcellularLocation>
</comment>
<comment type="similarity">
    <text evidence="3">Belongs to the Cu-Zn superoxide dismutase family.</text>
</comment>
<accession>Q95086</accession>
<accession>Q2LZ29</accession>
<feature type="initiator methionine" description="Removed" evidence="1">
    <location>
        <position position="1"/>
    </location>
</feature>
<feature type="chain" id="PRO_0000164092" description="Superoxide dismutase [Cu-Zn]">
    <location>
        <begin position="2"/>
        <end position="152"/>
    </location>
</feature>
<feature type="binding site" evidence="1">
    <location>
        <position position="44"/>
    </location>
    <ligand>
        <name>Cu cation</name>
        <dbReference type="ChEBI" id="CHEBI:23378"/>
        <note>catalytic</note>
    </ligand>
</feature>
<feature type="binding site" evidence="1">
    <location>
        <position position="46"/>
    </location>
    <ligand>
        <name>Cu cation</name>
        <dbReference type="ChEBI" id="CHEBI:23378"/>
        <note>catalytic</note>
    </ligand>
</feature>
<feature type="binding site" evidence="1">
    <location>
        <position position="61"/>
    </location>
    <ligand>
        <name>Cu cation</name>
        <dbReference type="ChEBI" id="CHEBI:23378"/>
        <note>catalytic</note>
    </ligand>
</feature>
<feature type="binding site" evidence="1">
    <location>
        <position position="61"/>
    </location>
    <ligand>
        <name>Zn(2+)</name>
        <dbReference type="ChEBI" id="CHEBI:29105"/>
        <note>structural</note>
    </ligand>
</feature>
<feature type="binding site" evidence="1">
    <location>
        <position position="69"/>
    </location>
    <ligand>
        <name>Zn(2+)</name>
        <dbReference type="ChEBI" id="CHEBI:29105"/>
        <note>structural</note>
    </ligand>
</feature>
<feature type="binding site" evidence="1">
    <location>
        <position position="78"/>
    </location>
    <ligand>
        <name>Zn(2+)</name>
        <dbReference type="ChEBI" id="CHEBI:29105"/>
        <note>structural</note>
    </ligand>
</feature>
<feature type="binding site" evidence="1">
    <location>
        <position position="81"/>
    </location>
    <ligand>
        <name>Zn(2+)</name>
        <dbReference type="ChEBI" id="CHEBI:29105"/>
        <note>structural</note>
    </ligand>
</feature>
<feature type="binding site" evidence="1">
    <location>
        <position position="118"/>
    </location>
    <ligand>
        <name>Cu cation</name>
        <dbReference type="ChEBI" id="CHEBI:23378"/>
        <note>catalytic</note>
    </ligand>
</feature>
<feature type="sequence conflict" description="In Ref. 2; AAB50303." evidence="3" ref="2">
    <original>V</original>
    <variation>G</variation>
    <location>
        <position position="33"/>
    </location>
</feature>
<keyword id="KW-0049">Antioxidant</keyword>
<keyword id="KW-0186">Copper</keyword>
<keyword id="KW-0963">Cytoplasm</keyword>
<keyword id="KW-0479">Metal-binding</keyword>
<keyword id="KW-0560">Oxidoreductase</keyword>
<keyword id="KW-1185">Reference proteome</keyword>
<keyword id="KW-0862">Zinc</keyword>
<organism>
    <name type="scientific">Drosophila pseudoobscura pseudoobscura</name>
    <name type="common">Fruit fly</name>
    <dbReference type="NCBI Taxonomy" id="46245"/>
    <lineage>
        <taxon>Eukaryota</taxon>
        <taxon>Metazoa</taxon>
        <taxon>Ecdysozoa</taxon>
        <taxon>Arthropoda</taxon>
        <taxon>Hexapoda</taxon>
        <taxon>Insecta</taxon>
        <taxon>Pterygota</taxon>
        <taxon>Neoptera</taxon>
        <taxon>Endopterygota</taxon>
        <taxon>Diptera</taxon>
        <taxon>Brachycera</taxon>
        <taxon>Muscomorpha</taxon>
        <taxon>Ephydroidea</taxon>
        <taxon>Drosophilidae</taxon>
        <taxon>Drosophila</taxon>
        <taxon>Sophophora</taxon>
    </lineage>
</organism>
<name>SODC_DROPS</name>
<reference key="1">
    <citation type="journal article" date="2005" name="Genome Res.">
        <title>Comparative genome sequencing of Drosophila pseudoobscura: chromosomal, gene, and cis-element evolution.</title>
        <authorList>
            <person name="Richards S."/>
            <person name="Liu Y."/>
            <person name="Bettencourt B.R."/>
            <person name="Hradecky P."/>
            <person name="Letovsky S."/>
            <person name="Nielsen R."/>
            <person name="Thornton K."/>
            <person name="Hubisz M.J."/>
            <person name="Chen R."/>
            <person name="Meisel R.P."/>
            <person name="Couronne O."/>
            <person name="Hua S."/>
            <person name="Smith M.A."/>
            <person name="Zhang P."/>
            <person name="Liu J."/>
            <person name="Bussemaker H.J."/>
            <person name="van Batenburg M.F."/>
            <person name="Howells S.L."/>
            <person name="Scherer S.E."/>
            <person name="Sodergren E."/>
            <person name="Matthews B.B."/>
            <person name="Crosby M.A."/>
            <person name="Schroeder A.J."/>
            <person name="Ortiz-Barrientos D."/>
            <person name="Rives C.M."/>
            <person name="Metzker M.L."/>
            <person name="Muzny D.M."/>
            <person name="Scott G."/>
            <person name="Steffen D."/>
            <person name="Wheeler D.A."/>
            <person name="Worley K.C."/>
            <person name="Havlak P."/>
            <person name="Durbin K.J."/>
            <person name="Egan A."/>
            <person name="Gill R."/>
            <person name="Hume J."/>
            <person name="Morgan M.B."/>
            <person name="Miner G."/>
            <person name="Hamilton C."/>
            <person name="Huang Y."/>
            <person name="Waldron L."/>
            <person name="Verduzco D."/>
            <person name="Clerc-Blankenburg K.P."/>
            <person name="Dubchak I."/>
            <person name="Noor M.A.F."/>
            <person name="Anderson W."/>
            <person name="White K.P."/>
            <person name="Clark A.G."/>
            <person name="Schaeffer S.W."/>
            <person name="Gelbart W.M."/>
            <person name="Weinstock G.M."/>
            <person name="Gibbs R.A."/>
        </authorList>
    </citation>
    <scope>NUCLEOTIDE SEQUENCE [LARGE SCALE GENOMIC DNA]</scope>
    <source>
        <strain>MV2-25 / Tucson 14011-0121.94</strain>
    </source>
</reference>
<reference key="2">
    <citation type="journal article" date="1997" name="Mol. Phylogenet. Evol.">
        <title>Evolution of the Drosophila obscura species group inferred from the Gpdh and Sod genes.</title>
        <authorList>
            <person name="Barrio E."/>
            <person name="Ayala F.J."/>
        </authorList>
    </citation>
    <scope>NUCLEOTIDE SEQUENCE [GENOMIC DNA] OF 8-121</scope>
    <source>
        <strain>NDSSC 14011-0121.43</strain>
    </source>
</reference>
<dbReference type="EC" id="1.15.1.1"/>
<dbReference type="EMBL" id="CH379069">
    <property type="protein sequence ID" value="EAL29680.2"/>
    <property type="molecule type" value="Genomic_DNA"/>
</dbReference>
<dbReference type="EMBL" id="U47871">
    <property type="protein sequence ID" value="AAB50303.1"/>
    <property type="molecule type" value="Genomic_DNA"/>
</dbReference>
<dbReference type="RefSeq" id="XP_001353944.2">
    <property type="nucleotide sequence ID" value="XM_001353908.3"/>
</dbReference>
<dbReference type="SMR" id="Q95086"/>
<dbReference type="FunCoup" id="Q95086">
    <property type="interactions" value="1277"/>
</dbReference>
<dbReference type="STRING" id="46245.Q95086"/>
<dbReference type="EnsemblMetazoa" id="FBtr0277000">
    <property type="protein sequence ID" value="FBpp0275438"/>
    <property type="gene ID" value="FBgn0016313"/>
</dbReference>
<dbReference type="GeneID" id="4813641"/>
<dbReference type="KEGG" id="dpo:4813641"/>
<dbReference type="CTD" id="6647"/>
<dbReference type="eggNOG" id="KOG0441">
    <property type="taxonomic scope" value="Eukaryota"/>
</dbReference>
<dbReference type="HOGENOM" id="CLU_056632_4_1_1"/>
<dbReference type="InParanoid" id="Q95086"/>
<dbReference type="OMA" id="AQRGFHI"/>
<dbReference type="Proteomes" id="UP000001819">
    <property type="component" value="Chromosome X"/>
</dbReference>
<dbReference type="Bgee" id="FBgn0016313">
    <property type="expression patterns" value="Expressed in female reproductive system and 2 other cell types or tissues"/>
</dbReference>
<dbReference type="GO" id="GO:0005737">
    <property type="term" value="C:cytoplasm"/>
    <property type="evidence" value="ECO:0007669"/>
    <property type="project" value="UniProtKB-SubCell"/>
</dbReference>
<dbReference type="GO" id="GO:0005507">
    <property type="term" value="F:copper ion binding"/>
    <property type="evidence" value="ECO:0007669"/>
    <property type="project" value="InterPro"/>
</dbReference>
<dbReference type="GO" id="GO:0004784">
    <property type="term" value="F:superoxide dismutase activity"/>
    <property type="evidence" value="ECO:0007669"/>
    <property type="project" value="UniProtKB-EC"/>
</dbReference>
<dbReference type="CDD" id="cd00305">
    <property type="entry name" value="Cu-Zn_Superoxide_Dismutase"/>
    <property type="match status" value="1"/>
</dbReference>
<dbReference type="FunFam" id="2.60.40.200:FF:000001">
    <property type="entry name" value="Superoxide dismutase [Cu-Zn]"/>
    <property type="match status" value="1"/>
</dbReference>
<dbReference type="Gene3D" id="2.60.40.200">
    <property type="entry name" value="Superoxide dismutase, copper/zinc binding domain"/>
    <property type="match status" value="1"/>
</dbReference>
<dbReference type="InterPro" id="IPR036423">
    <property type="entry name" value="SOD-like_Cu/Zn_dom_sf"/>
</dbReference>
<dbReference type="InterPro" id="IPR024134">
    <property type="entry name" value="SOD_Cu/Zn_/chaperone"/>
</dbReference>
<dbReference type="InterPro" id="IPR018152">
    <property type="entry name" value="SOD_Cu/Zn_BS"/>
</dbReference>
<dbReference type="InterPro" id="IPR001424">
    <property type="entry name" value="SOD_Cu_Zn_dom"/>
</dbReference>
<dbReference type="PANTHER" id="PTHR10003">
    <property type="entry name" value="SUPEROXIDE DISMUTASE CU-ZN -RELATED"/>
    <property type="match status" value="1"/>
</dbReference>
<dbReference type="Pfam" id="PF00080">
    <property type="entry name" value="Sod_Cu"/>
    <property type="match status" value="1"/>
</dbReference>
<dbReference type="PRINTS" id="PR00068">
    <property type="entry name" value="CUZNDISMTASE"/>
</dbReference>
<dbReference type="SUPFAM" id="SSF49329">
    <property type="entry name" value="Cu,Zn superoxide dismutase-like"/>
    <property type="match status" value="1"/>
</dbReference>
<dbReference type="PROSITE" id="PS00087">
    <property type="entry name" value="SOD_CU_ZN_1"/>
    <property type="match status" value="1"/>
</dbReference>
<dbReference type="PROSITE" id="PS00332">
    <property type="entry name" value="SOD_CU_ZN_2"/>
    <property type="match status" value="1"/>
</dbReference>
<gene>
    <name evidence="2" type="primary">Sod1</name>
    <name evidence="2" type="synonym">Sod</name>
    <name type="ORF">GA11202</name>
</gene>
<evidence type="ECO:0000250" key="1"/>
<evidence type="ECO:0000250" key="2">
    <source>
        <dbReference type="UniProtKB" id="P61851"/>
    </source>
</evidence>
<evidence type="ECO:0000305" key="3"/>